<dbReference type="EMBL" id="AY916449">
    <property type="protein sequence ID" value="AAW82522.1"/>
    <property type="molecule type" value="Genomic_DNA"/>
</dbReference>
<dbReference type="RefSeq" id="YP_358600.1">
    <property type="nucleotide sequence ID" value="NC_007499.1"/>
</dbReference>
<dbReference type="SMR" id="Q3BAL8"/>
<dbReference type="GeneID" id="3741703"/>
<dbReference type="GO" id="GO:0009507">
    <property type="term" value="C:chloroplast"/>
    <property type="evidence" value="ECO:0007669"/>
    <property type="project" value="UniProtKB-SubCell"/>
</dbReference>
<dbReference type="GO" id="GO:0005763">
    <property type="term" value="C:mitochondrial small ribosomal subunit"/>
    <property type="evidence" value="ECO:0007669"/>
    <property type="project" value="TreeGrafter"/>
</dbReference>
<dbReference type="GO" id="GO:0070181">
    <property type="term" value="F:small ribosomal subunit rRNA binding"/>
    <property type="evidence" value="ECO:0007669"/>
    <property type="project" value="TreeGrafter"/>
</dbReference>
<dbReference type="GO" id="GO:0003735">
    <property type="term" value="F:structural constituent of ribosome"/>
    <property type="evidence" value="ECO:0007669"/>
    <property type="project" value="InterPro"/>
</dbReference>
<dbReference type="GO" id="GO:0006412">
    <property type="term" value="P:translation"/>
    <property type="evidence" value="ECO:0007669"/>
    <property type="project" value="UniProtKB-UniRule"/>
</dbReference>
<dbReference type="FunFam" id="4.10.640.10:FF:000002">
    <property type="entry name" value="30S ribosomal protein S18, chloroplastic"/>
    <property type="match status" value="1"/>
</dbReference>
<dbReference type="Gene3D" id="4.10.640.10">
    <property type="entry name" value="Ribosomal protein S18"/>
    <property type="match status" value="1"/>
</dbReference>
<dbReference type="HAMAP" id="MF_00270">
    <property type="entry name" value="Ribosomal_bS18"/>
    <property type="match status" value="1"/>
</dbReference>
<dbReference type="InterPro" id="IPR001648">
    <property type="entry name" value="Ribosomal_bS18"/>
</dbReference>
<dbReference type="InterPro" id="IPR036870">
    <property type="entry name" value="Ribosomal_bS18_sf"/>
</dbReference>
<dbReference type="NCBIfam" id="TIGR00165">
    <property type="entry name" value="S18"/>
    <property type="match status" value="1"/>
</dbReference>
<dbReference type="PANTHER" id="PTHR13479">
    <property type="entry name" value="30S RIBOSOMAL PROTEIN S18"/>
    <property type="match status" value="1"/>
</dbReference>
<dbReference type="PANTHER" id="PTHR13479:SF40">
    <property type="entry name" value="SMALL RIBOSOMAL SUBUNIT PROTEIN BS18M"/>
    <property type="match status" value="1"/>
</dbReference>
<dbReference type="Pfam" id="PF01084">
    <property type="entry name" value="Ribosomal_S18"/>
    <property type="match status" value="1"/>
</dbReference>
<dbReference type="PRINTS" id="PR00974">
    <property type="entry name" value="RIBOSOMALS18"/>
</dbReference>
<dbReference type="SUPFAM" id="SSF46911">
    <property type="entry name" value="Ribosomal protein S18"/>
    <property type="match status" value="1"/>
</dbReference>
<geneLocation type="chloroplast"/>
<name>RR18_PHAAO</name>
<comment type="subunit">
    <text>Part of the 30S ribosomal subunit.</text>
</comment>
<comment type="subcellular location">
    <subcellularLocation>
        <location>Plastid</location>
        <location>Chloroplast</location>
    </subcellularLocation>
</comment>
<comment type="similarity">
    <text evidence="1">Belongs to the bacterial ribosomal protein bS18 family.</text>
</comment>
<organism>
    <name type="scientific">Phalaenopsis aphrodite subsp. formosana</name>
    <name type="common">Moth orchid</name>
    <dbReference type="NCBI Taxonomy" id="308872"/>
    <lineage>
        <taxon>Eukaryota</taxon>
        <taxon>Viridiplantae</taxon>
        <taxon>Streptophyta</taxon>
        <taxon>Embryophyta</taxon>
        <taxon>Tracheophyta</taxon>
        <taxon>Spermatophyta</taxon>
        <taxon>Magnoliopsida</taxon>
        <taxon>Liliopsida</taxon>
        <taxon>Asparagales</taxon>
        <taxon>Orchidaceae</taxon>
        <taxon>Epidendroideae</taxon>
        <taxon>Vandeae</taxon>
        <taxon>Aeridinae</taxon>
        <taxon>Phalaenopsis</taxon>
    </lineage>
</organism>
<sequence>MDKSKQPFRKSKRSFRRRLPPIGSGDQIDYRNMSLISRFLSEQGKILSRRTNRLTLKQQRLITIAIKQARILSLLPFRNNEKQLERVESIPRTTGPRTKNK</sequence>
<evidence type="ECO:0000255" key="1">
    <source>
        <dbReference type="HAMAP-Rule" id="MF_00270"/>
    </source>
</evidence>
<evidence type="ECO:0000256" key="2">
    <source>
        <dbReference type="SAM" id="MobiDB-lite"/>
    </source>
</evidence>
<evidence type="ECO:0000305" key="3"/>
<proteinExistence type="inferred from homology"/>
<accession>Q3BAL8</accession>
<protein>
    <recommendedName>
        <fullName evidence="1">Small ribosomal subunit protein bS18c</fullName>
    </recommendedName>
    <alternativeName>
        <fullName evidence="3">30S ribosomal protein S18, chloroplastic</fullName>
    </alternativeName>
</protein>
<keyword id="KW-0150">Chloroplast</keyword>
<keyword id="KW-0934">Plastid</keyword>
<keyword id="KW-0687">Ribonucleoprotein</keyword>
<keyword id="KW-0689">Ribosomal protein</keyword>
<keyword id="KW-0694">RNA-binding</keyword>
<keyword id="KW-0699">rRNA-binding</keyword>
<gene>
    <name evidence="1" type="primary">rps18</name>
</gene>
<reference key="1">
    <citation type="journal article" date="2006" name="Mol. Biol. Evol.">
        <title>The chloroplast genome of Phalaenopsis aphrodite (Orchidaceae): comparative analysis of evolutionary rate with that of grasses and its phylogenetic implications.</title>
        <authorList>
            <person name="Chang C.-C."/>
            <person name="Lin H.-C."/>
            <person name="Lin I.-P."/>
            <person name="Chow T.-Y."/>
            <person name="Chen H.-H."/>
            <person name="Chen W.-H."/>
            <person name="Cheng C.-H."/>
            <person name="Lin C.-Y."/>
            <person name="Liu S.-M."/>
            <person name="Chang C.-C."/>
            <person name="Chaw S.-M."/>
        </authorList>
    </citation>
    <scope>NUCLEOTIDE SEQUENCE [LARGE SCALE GENOMIC DNA]</scope>
    <source>
        <strain>cv. Taisugar TS-97</strain>
    </source>
</reference>
<feature type="chain" id="PRO_0000276882" description="Small ribosomal subunit protein bS18c">
    <location>
        <begin position="1"/>
        <end position="101"/>
    </location>
</feature>
<feature type="region of interest" description="Disordered" evidence="2">
    <location>
        <begin position="1"/>
        <end position="26"/>
    </location>
</feature>
<feature type="compositionally biased region" description="Basic residues" evidence="2">
    <location>
        <begin position="1"/>
        <end position="19"/>
    </location>
</feature>